<dbReference type="EC" id="4.4.1.16" evidence="1"/>
<dbReference type="EMBL" id="AF175767">
    <property type="protein sequence ID" value="AAF36816.1"/>
    <property type="molecule type" value="mRNA"/>
</dbReference>
<dbReference type="EMBL" id="AC016757">
    <property type="protein sequence ID" value="AAY24333.1"/>
    <property type="molecule type" value="Genomic_DNA"/>
</dbReference>
<dbReference type="EMBL" id="AC016776">
    <property type="protein sequence ID" value="AAY24221.1"/>
    <property type="molecule type" value="Genomic_DNA"/>
</dbReference>
<dbReference type="EMBL" id="CH471063">
    <property type="protein sequence ID" value="EAW71139.1"/>
    <property type="molecule type" value="Genomic_DNA"/>
</dbReference>
<dbReference type="EMBL" id="BC000586">
    <property type="protein sequence ID" value="AAH00586.2"/>
    <property type="molecule type" value="mRNA"/>
</dbReference>
<dbReference type="EMBL" id="BC007891">
    <property type="protein sequence ID" value="AAH07891.1"/>
    <property type="molecule type" value="mRNA"/>
</dbReference>
<dbReference type="EMBL" id="AK001377">
    <property type="protein sequence ID" value="BAA91659.1"/>
    <property type="status" value="ALT_INIT"/>
    <property type="molecule type" value="mRNA"/>
</dbReference>
<dbReference type="CCDS" id="CCDS2524.3">
    <molecule id="Q96I15-1"/>
</dbReference>
<dbReference type="RefSeq" id="NP_057594.4">
    <molecule id="Q96I15-1"/>
    <property type="nucleotide sequence ID" value="NM_016510.5"/>
</dbReference>
<dbReference type="PDB" id="3GZC">
    <property type="method" value="X-ray"/>
    <property type="resolution" value="2.10 A"/>
    <property type="chains" value="A/B=8-445"/>
</dbReference>
<dbReference type="PDB" id="3GZD">
    <property type="method" value="X-ray"/>
    <property type="resolution" value="1.80 A"/>
    <property type="chains" value="A/B/C/D=8-445"/>
</dbReference>
<dbReference type="PDBsum" id="3GZC"/>
<dbReference type="PDBsum" id="3GZD"/>
<dbReference type="SMR" id="Q96I15"/>
<dbReference type="BioGRID" id="119599">
    <property type="interactions" value="46"/>
</dbReference>
<dbReference type="FunCoup" id="Q96I15">
    <property type="interactions" value="547"/>
</dbReference>
<dbReference type="IntAct" id="Q96I15">
    <property type="interactions" value="16"/>
</dbReference>
<dbReference type="MINT" id="Q96I15"/>
<dbReference type="STRING" id="9606.ENSP00000499199"/>
<dbReference type="DrugBank" id="DB00114">
    <property type="generic name" value="Pyridoxal phosphate"/>
</dbReference>
<dbReference type="DrugBank" id="DB11135">
    <property type="generic name" value="Selenium"/>
</dbReference>
<dbReference type="GlyGen" id="Q96I15">
    <property type="glycosylation" value="1 site, 1 O-linked glycan (1 site)"/>
</dbReference>
<dbReference type="iPTMnet" id="Q96I15"/>
<dbReference type="PhosphoSitePlus" id="Q96I15"/>
<dbReference type="BioMuta" id="SCLY"/>
<dbReference type="DMDM" id="527504087"/>
<dbReference type="jPOST" id="Q96I15"/>
<dbReference type="MassIVE" id="Q96I15"/>
<dbReference type="PaxDb" id="9606-ENSP00000254663"/>
<dbReference type="PeptideAtlas" id="Q96I15"/>
<dbReference type="ProteomicsDB" id="76802">
    <molecule id="Q96I15-1"/>
</dbReference>
<dbReference type="ProteomicsDB" id="76803">
    <molecule id="Q96I15-2"/>
</dbReference>
<dbReference type="Pumba" id="Q96I15"/>
<dbReference type="Antibodypedia" id="34490">
    <property type="antibodies" value="134 antibodies from 23 providers"/>
</dbReference>
<dbReference type="DNASU" id="51540"/>
<dbReference type="Ensembl" id="ENST00000254663.12">
    <molecule id="Q96I15-1"/>
    <property type="protein sequence ID" value="ENSP00000254663.7"/>
    <property type="gene ID" value="ENSG00000132330.18"/>
</dbReference>
<dbReference type="Ensembl" id="ENST00000409736.6">
    <molecule id="Q96I15-2"/>
    <property type="protein sequence ID" value="ENSP00000387162.2"/>
    <property type="gene ID" value="ENSG00000132330.18"/>
</dbReference>
<dbReference type="GeneID" id="51540"/>
<dbReference type="KEGG" id="hsa:51540"/>
<dbReference type="MANE-Select" id="ENST00000254663.12">
    <property type="protein sequence ID" value="ENSP00000254663.7"/>
    <property type="RefSeq nucleotide sequence ID" value="NM_016510.7"/>
    <property type="RefSeq protein sequence ID" value="NP_057594.5"/>
</dbReference>
<dbReference type="UCSC" id="uc061uct.1">
    <molecule id="Q96I15-1"/>
    <property type="organism name" value="human"/>
</dbReference>
<dbReference type="AGR" id="HGNC:18161"/>
<dbReference type="CTD" id="51540"/>
<dbReference type="DisGeNET" id="51540"/>
<dbReference type="GeneCards" id="SCLY"/>
<dbReference type="HGNC" id="HGNC:18161">
    <property type="gene designation" value="SCLY"/>
</dbReference>
<dbReference type="HPA" id="ENSG00000132330">
    <property type="expression patterns" value="Tissue enhanced (liver)"/>
</dbReference>
<dbReference type="MIM" id="611056">
    <property type="type" value="gene"/>
</dbReference>
<dbReference type="neXtProt" id="NX_Q96I15"/>
<dbReference type="OpenTargets" id="ENSG00000132330"/>
<dbReference type="PharmGKB" id="PA134979359"/>
<dbReference type="VEuPathDB" id="HostDB:ENSG00000132330"/>
<dbReference type="eggNOG" id="KOG1549">
    <property type="taxonomic scope" value="Eukaryota"/>
</dbReference>
<dbReference type="GeneTree" id="ENSGT00940000157773"/>
<dbReference type="HOGENOM" id="CLU_003433_10_0_1"/>
<dbReference type="InParanoid" id="Q96I15"/>
<dbReference type="OrthoDB" id="10250117at2759"/>
<dbReference type="PAN-GO" id="Q96I15">
    <property type="GO annotations" value="0 GO annotations based on evolutionary models"/>
</dbReference>
<dbReference type="PhylomeDB" id="Q96I15"/>
<dbReference type="TreeFam" id="TF313550"/>
<dbReference type="BRENDA" id="4.4.1.16">
    <property type="organism ID" value="2681"/>
</dbReference>
<dbReference type="PathwayCommons" id="Q96I15"/>
<dbReference type="Reactome" id="R-HSA-2408508">
    <property type="pathway name" value="Metabolism of ingested SeMet, Sec, MeSec into H2Se"/>
</dbReference>
<dbReference type="SignaLink" id="Q96I15"/>
<dbReference type="BioGRID-ORCS" id="51540">
    <property type="hits" value="16 hits in 1160 CRISPR screens"/>
</dbReference>
<dbReference type="ChiTaRS" id="SCLY">
    <property type="organism name" value="human"/>
</dbReference>
<dbReference type="EvolutionaryTrace" id="Q96I15"/>
<dbReference type="GenomeRNAi" id="51540"/>
<dbReference type="Pharos" id="Q96I15">
    <property type="development level" value="Tbio"/>
</dbReference>
<dbReference type="PRO" id="PR:Q96I15"/>
<dbReference type="Proteomes" id="UP000005640">
    <property type="component" value="Chromosome 2"/>
</dbReference>
<dbReference type="RNAct" id="Q96I15">
    <property type="molecule type" value="protein"/>
</dbReference>
<dbReference type="Bgee" id="ENSG00000132330">
    <property type="expression patterns" value="Expressed in right lobe of liver and 107 other cell types or tissues"/>
</dbReference>
<dbReference type="ExpressionAtlas" id="Q96I15">
    <property type="expression patterns" value="baseline and differential"/>
</dbReference>
<dbReference type="GO" id="GO:1902494">
    <property type="term" value="C:catalytic complex"/>
    <property type="evidence" value="ECO:0007669"/>
    <property type="project" value="Ensembl"/>
</dbReference>
<dbReference type="GO" id="GO:0005829">
    <property type="term" value="C:cytosol"/>
    <property type="evidence" value="ECO:0000304"/>
    <property type="project" value="Reactome"/>
</dbReference>
<dbReference type="GO" id="GO:0005794">
    <property type="term" value="C:Golgi apparatus"/>
    <property type="evidence" value="ECO:0000314"/>
    <property type="project" value="HPA"/>
</dbReference>
<dbReference type="GO" id="GO:0016597">
    <property type="term" value="F:amino acid binding"/>
    <property type="evidence" value="ECO:0007669"/>
    <property type="project" value="Ensembl"/>
</dbReference>
<dbReference type="GO" id="GO:0042803">
    <property type="term" value="F:protein homodimerization activity"/>
    <property type="evidence" value="ECO:0007669"/>
    <property type="project" value="Ensembl"/>
</dbReference>
<dbReference type="GO" id="GO:0009000">
    <property type="term" value="F:selenocysteine lyase activity"/>
    <property type="evidence" value="ECO:0000304"/>
    <property type="project" value="ProtInc"/>
</dbReference>
<dbReference type="GO" id="GO:0016740">
    <property type="term" value="F:transferase activity"/>
    <property type="evidence" value="ECO:0007669"/>
    <property type="project" value="UniProtKB-KW"/>
</dbReference>
<dbReference type="GO" id="GO:0070279">
    <property type="term" value="F:vitamin B6 binding"/>
    <property type="evidence" value="ECO:0007669"/>
    <property type="project" value="Ensembl"/>
</dbReference>
<dbReference type="GO" id="GO:0006520">
    <property type="term" value="P:amino acid metabolic process"/>
    <property type="evidence" value="ECO:0000304"/>
    <property type="project" value="ProtInc"/>
</dbReference>
<dbReference type="GO" id="GO:0016261">
    <property type="term" value="P:selenocysteine catabolic process"/>
    <property type="evidence" value="ECO:0007669"/>
    <property type="project" value="Ensembl"/>
</dbReference>
<dbReference type="FunFam" id="3.40.640.10:FF:000083">
    <property type="entry name" value="Selenocysteine lyase"/>
    <property type="match status" value="1"/>
</dbReference>
<dbReference type="FunFam" id="3.90.1150.10:FF:000065">
    <property type="entry name" value="Selenocysteine lyase"/>
    <property type="match status" value="1"/>
</dbReference>
<dbReference type="Gene3D" id="1.10.260.50">
    <property type="match status" value="1"/>
</dbReference>
<dbReference type="Gene3D" id="3.90.1150.10">
    <property type="entry name" value="Aspartate Aminotransferase, domain 1"/>
    <property type="match status" value="1"/>
</dbReference>
<dbReference type="Gene3D" id="3.40.640.10">
    <property type="entry name" value="Type I PLP-dependent aspartate aminotransferase-like (Major domain)"/>
    <property type="match status" value="1"/>
</dbReference>
<dbReference type="InterPro" id="IPR000192">
    <property type="entry name" value="Aminotrans_V_dom"/>
</dbReference>
<dbReference type="InterPro" id="IPR016454">
    <property type="entry name" value="Cysteine_dSase"/>
</dbReference>
<dbReference type="InterPro" id="IPR015424">
    <property type="entry name" value="PyrdxlP-dep_Trfase"/>
</dbReference>
<dbReference type="InterPro" id="IPR015421">
    <property type="entry name" value="PyrdxlP-dep_Trfase_major"/>
</dbReference>
<dbReference type="InterPro" id="IPR015422">
    <property type="entry name" value="PyrdxlP-dep_Trfase_small"/>
</dbReference>
<dbReference type="PANTHER" id="PTHR11601">
    <property type="entry name" value="CYSTEINE DESULFURYLASE FAMILY MEMBER"/>
    <property type="match status" value="1"/>
</dbReference>
<dbReference type="PANTHER" id="PTHR11601:SF62">
    <property type="entry name" value="SELENOCYSTEINE LYASE"/>
    <property type="match status" value="1"/>
</dbReference>
<dbReference type="Pfam" id="PF00266">
    <property type="entry name" value="Aminotran_5"/>
    <property type="match status" value="1"/>
</dbReference>
<dbReference type="PIRSF" id="PIRSF005572">
    <property type="entry name" value="NifS"/>
    <property type="match status" value="1"/>
</dbReference>
<dbReference type="SUPFAM" id="SSF53383">
    <property type="entry name" value="PLP-dependent transferases"/>
    <property type="match status" value="1"/>
</dbReference>
<evidence type="ECO:0000250" key="1">
    <source>
        <dbReference type="UniProtKB" id="Q68FT9"/>
    </source>
</evidence>
<evidence type="ECO:0000250" key="2">
    <source>
        <dbReference type="UniProtKB" id="Q9JLI6"/>
    </source>
</evidence>
<evidence type="ECO:0000256" key="3">
    <source>
        <dbReference type="SAM" id="MobiDB-lite"/>
    </source>
</evidence>
<evidence type="ECO:0000269" key="4">
    <source>
    </source>
</evidence>
<evidence type="ECO:0000269" key="5">
    <source>
    </source>
</evidence>
<evidence type="ECO:0000269" key="6">
    <source ref="12"/>
</evidence>
<evidence type="ECO:0000303" key="7">
    <source>
    </source>
</evidence>
<evidence type="ECO:0000305" key="8"/>
<evidence type="ECO:0007744" key="9">
    <source>
    </source>
</evidence>
<evidence type="ECO:0007744" key="10">
    <source>
    </source>
</evidence>
<evidence type="ECO:0007744" key="11">
    <source>
    </source>
</evidence>
<evidence type="ECO:0007829" key="12">
    <source>
        <dbReference type="PDB" id="3GZD"/>
    </source>
</evidence>
<feature type="chain" id="PRO_0000317012" description="Selenocysteine lyase">
    <location>
        <begin position="1"/>
        <end position="445"/>
    </location>
</feature>
<feature type="region of interest" description="Disordered" evidence="3">
    <location>
        <begin position="1"/>
        <end position="28"/>
    </location>
</feature>
<feature type="active site" description="S-selanylcysteine intermediate" evidence="1">
    <location>
        <position position="388"/>
    </location>
</feature>
<feature type="modified residue" description="N-acetylmethionine" evidence="9 11">
    <location>
        <position position="1"/>
    </location>
</feature>
<feature type="modified residue" description="Phosphoserine" evidence="10">
    <location>
        <position position="129"/>
    </location>
</feature>
<feature type="modified residue" description="N6-(pyridoxal phosphate)lysine" evidence="6">
    <location>
        <position position="259"/>
    </location>
</feature>
<feature type="splice variant" id="VSP_030854" description="In isoform 2." evidence="7">
    <original>AAELVTQNCEAYEAHMRDVRDYLEERLEAEFGQKRIHLNSQFPGTQRLPNTCNFSIRGPRLQGHVVLAQCRVLMASVGAACHSDHGDQPSPVLLSYGVPFDVARNALRLSVGRSTTRAEVDLVVQDLKQAVAQLEDQA</original>
    <variation>VSPGELEEMS</variation>
    <location>
        <begin position="308"/>
        <end position="445"/>
    </location>
</feature>
<feature type="sequence variant" id="VAR_038464" description="In dbSNP:rs7597367.">
    <original>K</original>
    <variation>E</variation>
    <location>
        <position position="52"/>
    </location>
</feature>
<feature type="sequence variant" id="VAR_038465" description="In dbSNP:rs3210400." evidence="4">
    <original>A</original>
    <variation>T</variation>
    <location>
        <position position="175"/>
    </location>
</feature>
<feature type="sequence variant" id="VAR_038466" description="In dbSNP:rs35637307.">
    <original>F</original>
    <variation>S</variation>
    <location>
        <position position="276"/>
    </location>
</feature>
<feature type="sequence conflict" description="In Ref. 3; EAW71139." evidence="8" ref="3">
    <original>M</original>
    <variation>MPGSSGAGM</variation>
    <location>
        <position position="1"/>
    </location>
</feature>
<feature type="sequence conflict" description="In Ref. 1; AAF36816." evidence="8" ref="1">
    <original>L</original>
    <variation>V</variation>
    <location>
        <position position="42"/>
    </location>
</feature>
<feature type="turn" evidence="12">
    <location>
        <begin position="36"/>
        <end position="38"/>
    </location>
</feature>
<feature type="helix" evidence="12">
    <location>
        <begin position="44"/>
        <end position="56"/>
    </location>
</feature>
<feature type="helix" evidence="12">
    <location>
        <begin position="66"/>
        <end position="85"/>
    </location>
</feature>
<feature type="helix" evidence="12">
    <location>
        <begin position="90"/>
        <end position="92"/>
    </location>
</feature>
<feature type="strand" evidence="12">
    <location>
        <begin position="93"/>
        <end position="97"/>
    </location>
</feature>
<feature type="helix" evidence="12">
    <location>
        <begin position="99"/>
        <end position="118"/>
    </location>
</feature>
<feature type="strand" evidence="12">
    <location>
        <begin position="137"/>
        <end position="141"/>
    </location>
</feature>
<feature type="helix" evidence="12">
    <location>
        <begin position="146"/>
        <end position="157"/>
    </location>
</feature>
<feature type="strand" evidence="12">
    <location>
        <begin position="162"/>
        <end position="166"/>
    </location>
</feature>
<feature type="turn" evidence="12">
    <location>
        <begin position="170"/>
        <end position="172"/>
    </location>
</feature>
<feature type="helix" evidence="12">
    <location>
        <begin position="177"/>
        <end position="182"/>
    </location>
</feature>
<feature type="strand" evidence="12">
    <location>
        <begin position="188"/>
        <end position="192"/>
    </location>
</feature>
<feature type="turn" evidence="12">
    <location>
        <begin position="198"/>
        <end position="200"/>
    </location>
</feature>
<feature type="helix" evidence="12">
    <location>
        <begin position="206"/>
        <end position="222"/>
    </location>
</feature>
<feature type="strand" evidence="12">
    <location>
        <begin position="229"/>
        <end position="233"/>
    </location>
</feature>
<feature type="turn" evidence="12">
    <location>
        <begin position="235"/>
        <end position="240"/>
    </location>
</feature>
<feature type="helix" evidence="12">
    <location>
        <begin position="245"/>
        <end position="248"/>
    </location>
</feature>
<feature type="strand" evidence="12">
    <location>
        <begin position="251"/>
        <end position="256"/>
    </location>
</feature>
<feature type="helix" evidence="12">
    <location>
        <begin position="257"/>
        <end position="259"/>
    </location>
</feature>
<feature type="strand" evidence="12">
    <location>
        <begin position="266"/>
        <end position="270"/>
    </location>
</feature>
<feature type="turn" evidence="12">
    <location>
        <begin position="274"/>
        <end position="276"/>
    </location>
</feature>
<feature type="helix" evidence="12">
    <location>
        <begin position="289"/>
        <end position="291"/>
    </location>
</feature>
<feature type="helix" evidence="12">
    <location>
        <begin position="299"/>
        <end position="338"/>
    </location>
</feature>
<feature type="turn" evidence="12">
    <location>
        <begin position="340"/>
        <end position="342"/>
    </location>
</feature>
<feature type="strand" evidence="12">
    <location>
        <begin position="343"/>
        <end position="345"/>
    </location>
</feature>
<feature type="strand" evidence="12">
    <location>
        <begin position="358"/>
        <end position="363"/>
    </location>
</feature>
<feature type="helix" evidence="12">
    <location>
        <begin position="370"/>
        <end position="376"/>
    </location>
</feature>
<feature type="strand" evidence="12">
    <location>
        <begin position="378"/>
        <end position="381"/>
    </location>
</feature>
<feature type="strand" evidence="12">
    <location>
        <begin position="383"/>
        <end position="385"/>
    </location>
</feature>
<feature type="helix" evidence="12">
    <location>
        <begin position="387"/>
        <end position="389"/>
    </location>
</feature>
<feature type="helix" evidence="12">
    <location>
        <begin position="398"/>
        <end position="402"/>
    </location>
</feature>
<feature type="helix" evidence="12">
    <location>
        <begin position="407"/>
        <end position="410"/>
    </location>
</feature>
<feature type="strand" evidence="12">
    <location>
        <begin position="413"/>
        <end position="417"/>
    </location>
</feature>
<feature type="helix" evidence="12">
    <location>
        <begin position="424"/>
        <end position="442"/>
    </location>
</feature>
<name>SCLY_HUMAN</name>
<proteinExistence type="evidence at protein level"/>
<organism>
    <name type="scientific">Homo sapiens</name>
    <name type="common">Human</name>
    <dbReference type="NCBI Taxonomy" id="9606"/>
    <lineage>
        <taxon>Eukaryota</taxon>
        <taxon>Metazoa</taxon>
        <taxon>Chordata</taxon>
        <taxon>Craniata</taxon>
        <taxon>Vertebrata</taxon>
        <taxon>Euteleostomi</taxon>
        <taxon>Mammalia</taxon>
        <taxon>Eutheria</taxon>
        <taxon>Euarchontoglires</taxon>
        <taxon>Primates</taxon>
        <taxon>Haplorrhini</taxon>
        <taxon>Catarrhini</taxon>
        <taxon>Hominidae</taxon>
        <taxon>Homo</taxon>
    </lineage>
</organism>
<protein>
    <recommendedName>
        <fullName evidence="7">Selenocysteine lyase</fullName>
        <shortName evidence="7">hSCL</shortName>
        <ecNumber evidence="1">4.4.1.16</ecNumber>
    </recommendedName>
</protein>
<gene>
    <name type="primary">SCLY</name>
    <name type="synonym">SCL</name>
</gene>
<reference key="1">
    <citation type="journal article" date="2000" name="J. Biol. Chem.">
        <title>cDNA cloning, purification, and characterization of mouse liver selenocysteine lyase. Candidate for selenium delivery protein in selenoprotein synthesis.</title>
        <authorList>
            <person name="Mihara H."/>
            <person name="Kurihara T."/>
            <person name="Watanabe T."/>
            <person name="Yoshimura T."/>
            <person name="Esaki N."/>
        </authorList>
    </citation>
    <scope>NUCLEOTIDE SEQUENCE [MRNA] (ISOFORM 2)</scope>
    <source>
        <tissue>Brain</tissue>
    </source>
</reference>
<reference key="2">
    <citation type="journal article" date="2005" name="Nature">
        <title>Generation and annotation of the DNA sequences of human chromosomes 2 and 4.</title>
        <authorList>
            <person name="Hillier L.W."/>
            <person name="Graves T.A."/>
            <person name="Fulton R.S."/>
            <person name="Fulton L.A."/>
            <person name="Pepin K.H."/>
            <person name="Minx P."/>
            <person name="Wagner-McPherson C."/>
            <person name="Layman D."/>
            <person name="Wylie K."/>
            <person name="Sekhon M."/>
            <person name="Becker M.C."/>
            <person name="Fewell G.A."/>
            <person name="Delehaunty K.D."/>
            <person name="Miner T.L."/>
            <person name="Nash W.E."/>
            <person name="Kremitzki C."/>
            <person name="Oddy L."/>
            <person name="Du H."/>
            <person name="Sun H."/>
            <person name="Bradshaw-Cordum H."/>
            <person name="Ali J."/>
            <person name="Carter J."/>
            <person name="Cordes M."/>
            <person name="Harris A."/>
            <person name="Isak A."/>
            <person name="van Brunt A."/>
            <person name="Nguyen C."/>
            <person name="Du F."/>
            <person name="Courtney L."/>
            <person name="Kalicki J."/>
            <person name="Ozersky P."/>
            <person name="Abbott S."/>
            <person name="Armstrong J."/>
            <person name="Belter E.A."/>
            <person name="Caruso L."/>
            <person name="Cedroni M."/>
            <person name="Cotton M."/>
            <person name="Davidson T."/>
            <person name="Desai A."/>
            <person name="Elliott G."/>
            <person name="Erb T."/>
            <person name="Fronick C."/>
            <person name="Gaige T."/>
            <person name="Haakenson W."/>
            <person name="Haglund K."/>
            <person name="Holmes A."/>
            <person name="Harkins R."/>
            <person name="Kim K."/>
            <person name="Kruchowski S.S."/>
            <person name="Strong C.M."/>
            <person name="Grewal N."/>
            <person name="Goyea E."/>
            <person name="Hou S."/>
            <person name="Levy A."/>
            <person name="Martinka S."/>
            <person name="Mead K."/>
            <person name="McLellan M.D."/>
            <person name="Meyer R."/>
            <person name="Randall-Maher J."/>
            <person name="Tomlinson C."/>
            <person name="Dauphin-Kohlberg S."/>
            <person name="Kozlowicz-Reilly A."/>
            <person name="Shah N."/>
            <person name="Swearengen-Shahid S."/>
            <person name="Snider J."/>
            <person name="Strong J.T."/>
            <person name="Thompson J."/>
            <person name="Yoakum M."/>
            <person name="Leonard S."/>
            <person name="Pearman C."/>
            <person name="Trani L."/>
            <person name="Radionenko M."/>
            <person name="Waligorski J.E."/>
            <person name="Wang C."/>
            <person name="Rock S.M."/>
            <person name="Tin-Wollam A.-M."/>
            <person name="Maupin R."/>
            <person name="Latreille P."/>
            <person name="Wendl M.C."/>
            <person name="Yang S.-P."/>
            <person name="Pohl C."/>
            <person name="Wallis J.W."/>
            <person name="Spieth J."/>
            <person name="Bieri T.A."/>
            <person name="Berkowicz N."/>
            <person name="Nelson J.O."/>
            <person name="Osborne J."/>
            <person name="Ding L."/>
            <person name="Meyer R."/>
            <person name="Sabo A."/>
            <person name="Shotland Y."/>
            <person name="Sinha P."/>
            <person name="Wohldmann P.E."/>
            <person name="Cook L.L."/>
            <person name="Hickenbotham M.T."/>
            <person name="Eldred J."/>
            <person name="Williams D."/>
            <person name="Jones T.A."/>
            <person name="She X."/>
            <person name="Ciccarelli F.D."/>
            <person name="Izaurralde E."/>
            <person name="Taylor J."/>
            <person name="Schmutz J."/>
            <person name="Myers R.M."/>
            <person name="Cox D.R."/>
            <person name="Huang X."/>
            <person name="McPherson J.D."/>
            <person name="Mardis E.R."/>
            <person name="Clifton S.W."/>
            <person name="Warren W.C."/>
            <person name="Chinwalla A.T."/>
            <person name="Eddy S.R."/>
            <person name="Marra M.A."/>
            <person name="Ovcharenko I."/>
            <person name="Furey T.S."/>
            <person name="Miller W."/>
            <person name="Eichler E.E."/>
            <person name="Bork P."/>
            <person name="Suyama M."/>
            <person name="Torrents D."/>
            <person name="Waterston R.H."/>
            <person name="Wilson R.K."/>
        </authorList>
    </citation>
    <scope>NUCLEOTIDE SEQUENCE [LARGE SCALE GENOMIC DNA]</scope>
</reference>
<reference key="3">
    <citation type="submission" date="2005-07" db="EMBL/GenBank/DDBJ databases">
        <authorList>
            <person name="Mural R.J."/>
            <person name="Istrail S."/>
            <person name="Sutton G.G."/>
            <person name="Florea L."/>
            <person name="Halpern A.L."/>
            <person name="Mobarry C.M."/>
            <person name="Lippert R."/>
            <person name="Walenz B."/>
            <person name="Shatkay H."/>
            <person name="Dew I."/>
            <person name="Miller J.R."/>
            <person name="Flanigan M.J."/>
            <person name="Edwards N.J."/>
            <person name="Bolanos R."/>
            <person name="Fasulo D."/>
            <person name="Halldorsson B.V."/>
            <person name="Hannenhalli S."/>
            <person name="Turner R."/>
            <person name="Yooseph S."/>
            <person name="Lu F."/>
            <person name="Nusskern D.R."/>
            <person name="Shue B.C."/>
            <person name="Zheng X.H."/>
            <person name="Zhong F."/>
            <person name="Delcher A.L."/>
            <person name="Huson D.H."/>
            <person name="Kravitz S.A."/>
            <person name="Mouchard L."/>
            <person name="Reinert K."/>
            <person name="Remington K.A."/>
            <person name="Clark A.G."/>
            <person name="Waterman M.S."/>
            <person name="Eichler E.E."/>
            <person name="Adams M.D."/>
            <person name="Hunkapiller M.W."/>
            <person name="Myers E.W."/>
            <person name="Venter J.C."/>
        </authorList>
    </citation>
    <scope>NUCLEOTIDE SEQUENCE [LARGE SCALE GENOMIC DNA]</scope>
</reference>
<reference key="4">
    <citation type="journal article" date="2004" name="Genome Res.">
        <title>The status, quality, and expansion of the NIH full-length cDNA project: the Mammalian Gene Collection (MGC).</title>
        <authorList>
            <consortium name="The MGC Project Team"/>
        </authorList>
    </citation>
    <scope>NUCLEOTIDE SEQUENCE [LARGE SCALE MRNA] (ISOFORM 1)</scope>
    <scope>VARIANT THR-175</scope>
    <source>
        <tissue>Brain</tissue>
    </source>
</reference>
<reference key="5">
    <citation type="journal article" date="2004" name="Nat. Genet.">
        <title>Complete sequencing and characterization of 21,243 full-length human cDNAs.</title>
        <authorList>
            <person name="Ota T."/>
            <person name="Suzuki Y."/>
            <person name="Nishikawa T."/>
            <person name="Otsuki T."/>
            <person name="Sugiyama T."/>
            <person name="Irie R."/>
            <person name="Wakamatsu A."/>
            <person name="Hayashi K."/>
            <person name="Sato H."/>
            <person name="Nagai K."/>
            <person name="Kimura K."/>
            <person name="Makita H."/>
            <person name="Sekine M."/>
            <person name="Obayashi M."/>
            <person name="Nishi T."/>
            <person name="Shibahara T."/>
            <person name="Tanaka T."/>
            <person name="Ishii S."/>
            <person name="Yamamoto J."/>
            <person name="Saito K."/>
            <person name="Kawai Y."/>
            <person name="Isono Y."/>
            <person name="Nakamura Y."/>
            <person name="Nagahari K."/>
            <person name="Murakami K."/>
            <person name="Yasuda T."/>
            <person name="Iwayanagi T."/>
            <person name="Wagatsuma M."/>
            <person name="Shiratori A."/>
            <person name="Sudo H."/>
            <person name="Hosoiri T."/>
            <person name="Kaku Y."/>
            <person name="Kodaira H."/>
            <person name="Kondo H."/>
            <person name="Sugawara M."/>
            <person name="Takahashi M."/>
            <person name="Kanda K."/>
            <person name="Yokoi T."/>
            <person name="Furuya T."/>
            <person name="Kikkawa E."/>
            <person name="Omura Y."/>
            <person name="Abe K."/>
            <person name="Kamihara K."/>
            <person name="Katsuta N."/>
            <person name="Sato K."/>
            <person name="Tanikawa M."/>
            <person name="Yamazaki M."/>
            <person name="Ninomiya K."/>
            <person name="Ishibashi T."/>
            <person name="Yamashita H."/>
            <person name="Murakawa K."/>
            <person name="Fujimori K."/>
            <person name="Tanai H."/>
            <person name="Kimata M."/>
            <person name="Watanabe M."/>
            <person name="Hiraoka S."/>
            <person name="Chiba Y."/>
            <person name="Ishida S."/>
            <person name="Ono Y."/>
            <person name="Takiguchi S."/>
            <person name="Watanabe S."/>
            <person name="Yosida M."/>
            <person name="Hotuta T."/>
            <person name="Kusano J."/>
            <person name="Kanehori K."/>
            <person name="Takahashi-Fujii A."/>
            <person name="Hara H."/>
            <person name="Tanase T.-O."/>
            <person name="Nomura Y."/>
            <person name="Togiya S."/>
            <person name="Komai F."/>
            <person name="Hara R."/>
            <person name="Takeuchi K."/>
            <person name="Arita M."/>
            <person name="Imose N."/>
            <person name="Musashino K."/>
            <person name="Yuuki H."/>
            <person name="Oshima A."/>
            <person name="Sasaki N."/>
            <person name="Aotsuka S."/>
            <person name="Yoshikawa Y."/>
            <person name="Matsunawa H."/>
            <person name="Ichihara T."/>
            <person name="Shiohata N."/>
            <person name="Sano S."/>
            <person name="Moriya S."/>
            <person name="Momiyama H."/>
            <person name="Satoh N."/>
            <person name="Takami S."/>
            <person name="Terashima Y."/>
            <person name="Suzuki O."/>
            <person name="Nakagawa S."/>
            <person name="Senoh A."/>
            <person name="Mizoguchi H."/>
            <person name="Goto Y."/>
            <person name="Shimizu F."/>
            <person name="Wakebe H."/>
            <person name="Hishigaki H."/>
            <person name="Watanabe T."/>
            <person name="Sugiyama A."/>
            <person name="Takemoto M."/>
            <person name="Kawakami B."/>
            <person name="Yamazaki M."/>
            <person name="Watanabe K."/>
            <person name="Kumagai A."/>
            <person name="Itakura S."/>
            <person name="Fukuzumi Y."/>
            <person name="Fujimori Y."/>
            <person name="Komiyama M."/>
            <person name="Tashiro H."/>
            <person name="Tanigami A."/>
            <person name="Fujiwara T."/>
            <person name="Ono T."/>
            <person name="Yamada K."/>
            <person name="Fujii Y."/>
            <person name="Ozaki K."/>
            <person name="Hirao M."/>
            <person name="Ohmori Y."/>
            <person name="Kawabata A."/>
            <person name="Hikiji T."/>
            <person name="Kobatake N."/>
            <person name="Inagaki H."/>
            <person name="Ikema Y."/>
            <person name="Okamoto S."/>
            <person name="Okitani R."/>
            <person name="Kawakami T."/>
            <person name="Noguchi S."/>
            <person name="Itoh T."/>
            <person name="Shigeta K."/>
            <person name="Senba T."/>
            <person name="Matsumura K."/>
            <person name="Nakajima Y."/>
            <person name="Mizuno T."/>
            <person name="Morinaga M."/>
            <person name="Sasaki M."/>
            <person name="Togashi T."/>
            <person name="Oyama M."/>
            <person name="Hata H."/>
            <person name="Watanabe M."/>
            <person name="Komatsu T."/>
            <person name="Mizushima-Sugano J."/>
            <person name="Satoh T."/>
            <person name="Shirai Y."/>
            <person name="Takahashi Y."/>
            <person name="Nakagawa K."/>
            <person name="Okumura K."/>
            <person name="Nagase T."/>
            <person name="Nomura N."/>
            <person name="Kikuchi H."/>
            <person name="Masuho Y."/>
            <person name="Yamashita R."/>
            <person name="Nakai K."/>
            <person name="Yada T."/>
            <person name="Nakamura Y."/>
            <person name="Ohara O."/>
            <person name="Isogai T."/>
            <person name="Sugano S."/>
        </authorList>
    </citation>
    <scope>NUCLEOTIDE SEQUENCE [LARGE SCALE MRNA] OF 189-445</scope>
    <source>
        <tissue>Teratocarcinoma</tissue>
    </source>
</reference>
<reference key="6">
    <citation type="journal article" date="2006" name="Cell. Mol. Biol. Lett.">
        <title>Enhanced expression of selenocysteine lyase in acute glomerulonephritis and its regulation by AP-1.</title>
        <authorList>
            <person name="Jafari C."/>
            <person name="Panzer U."/>
            <person name="Steinmetz O.M."/>
            <person name="Zahner G."/>
            <person name="Stahl R.A."/>
            <person name="Harendza S."/>
        </authorList>
    </citation>
    <scope>INDUCTION BY JUN</scope>
</reference>
<reference key="7">
    <citation type="journal article" date="2009" name="Anal. Chem.">
        <title>Lys-N and trypsin cover complementary parts of the phosphoproteome in a refined SCX-based approach.</title>
        <authorList>
            <person name="Gauci S."/>
            <person name="Helbig A.O."/>
            <person name="Slijper M."/>
            <person name="Krijgsveld J."/>
            <person name="Heck A.J."/>
            <person name="Mohammed S."/>
        </authorList>
    </citation>
    <scope>ACETYLATION [LARGE SCALE ANALYSIS] AT MET-1</scope>
    <scope>IDENTIFICATION BY MASS SPECTROMETRY [LARGE SCALE ANALYSIS]</scope>
</reference>
<reference key="8">
    <citation type="journal article" date="2010" name="Sci. Signal.">
        <title>Quantitative phosphoproteomics reveals widespread full phosphorylation site occupancy during mitosis.</title>
        <authorList>
            <person name="Olsen J.V."/>
            <person name="Vermeulen M."/>
            <person name="Santamaria A."/>
            <person name="Kumar C."/>
            <person name="Miller M.L."/>
            <person name="Jensen L.J."/>
            <person name="Gnad F."/>
            <person name="Cox J."/>
            <person name="Jensen T.S."/>
            <person name="Nigg E.A."/>
            <person name="Brunak S."/>
            <person name="Mann M."/>
        </authorList>
    </citation>
    <scope>PHOSPHORYLATION [LARGE SCALE ANALYSIS] AT SER-129</scope>
    <scope>IDENTIFICATION BY MASS SPECTROMETRY [LARGE SCALE ANALYSIS]</scope>
    <source>
        <tissue>Cervix carcinoma</tissue>
    </source>
</reference>
<reference key="9">
    <citation type="journal article" date="2011" name="BMC Syst. Biol.">
        <title>Initial characterization of the human central proteome.</title>
        <authorList>
            <person name="Burkard T.R."/>
            <person name="Planyavsky M."/>
            <person name="Kaupe I."/>
            <person name="Breitwieser F.P."/>
            <person name="Buerckstuemmer T."/>
            <person name="Bennett K.L."/>
            <person name="Superti-Furga G."/>
            <person name="Colinge J."/>
        </authorList>
    </citation>
    <scope>IDENTIFICATION BY MASS SPECTROMETRY [LARGE SCALE ANALYSIS]</scope>
</reference>
<reference key="10">
    <citation type="journal article" date="2012" name="Proc. Natl. Acad. Sci. U.S.A.">
        <title>N-terminal acetylome analyses and functional insights of the N-terminal acetyltransferase NatB.</title>
        <authorList>
            <person name="Van Damme P."/>
            <person name="Lasa M."/>
            <person name="Polevoda B."/>
            <person name="Gazquez C."/>
            <person name="Elosegui-Artola A."/>
            <person name="Kim D.S."/>
            <person name="De Juan-Pardo E."/>
            <person name="Demeyer K."/>
            <person name="Hole K."/>
            <person name="Larrea E."/>
            <person name="Timmerman E."/>
            <person name="Prieto J."/>
            <person name="Arnesen T."/>
            <person name="Sherman F."/>
            <person name="Gevaert K."/>
            <person name="Aldabe R."/>
        </authorList>
    </citation>
    <scope>ACETYLATION [LARGE SCALE ANALYSIS] AT MET-1</scope>
    <scope>IDENTIFICATION BY MASS SPECTROMETRY [LARGE SCALE ANALYSIS]</scope>
</reference>
<reference key="11">
    <citation type="journal article" date="2014" name="J. Proteomics">
        <title>An enzyme assisted RP-RPLC approach for in-depth analysis of human liver phosphoproteome.</title>
        <authorList>
            <person name="Bian Y."/>
            <person name="Song C."/>
            <person name="Cheng K."/>
            <person name="Dong M."/>
            <person name="Wang F."/>
            <person name="Huang J."/>
            <person name="Sun D."/>
            <person name="Wang L."/>
            <person name="Ye M."/>
            <person name="Zou H."/>
        </authorList>
    </citation>
    <scope>IDENTIFICATION BY MASS SPECTROMETRY [LARGE SCALE ANALYSIS]</scope>
    <source>
        <tissue>Liver</tissue>
    </source>
</reference>
<reference key="12">
    <citation type="submission" date="2006-07" db="PDB data bank">
        <title>Structure of human selenocysteine lyase.</title>
        <authorList>
            <consortium name="Structural genomics consortium (SGC)"/>
        </authorList>
    </citation>
    <scope>X-RAY CRYSTALLOGRAPHY (2.0 ANGSTROMS) OF 8-445 IN COMPLEX WITH PYRIDOXAL PHOSPHATE</scope>
    <scope>COFACTOR</scope>
</reference>
<keyword id="KW-0002">3D-structure</keyword>
<keyword id="KW-0007">Acetylation</keyword>
<keyword id="KW-0025">Alternative splicing</keyword>
<keyword id="KW-0963">Cytoplasm</keyword>
<keyword id="KW-0456">Lyase</keyword>
<keyword id="KW-0597">Phosphoprotein</keyword>
<keyword id="KW-1267">Proteomics identification</keyword>
<keyword id="KW-0663">Pyridoxal phosphate</keyword>
<keyword id="KW-1185">Reference proteome</keyword>
<keyword id="KW-0808">Transferase</keyword>
<comment type="function">
    <text evidence="1">Catalyzes the decomposition of L-selenocysteine to L-alanine and elemental selenium.</text>
</comment>
<comment type="catalytic activity">
    <reaction evidence="1">
        <text>L-selenocysteine + AH2 = hydrogenselenide + L-alanine + A + H(+)</text>
        <dbReference type="Rhea" id="RHEA:11632"/>
        <dbReference type="ChEBI" id="CHEBI:13193"/>
        <dbReference type="ChEBI" id="CHEBI:15378"/>
        <dbReference type="ChEBI" id="CHEBI:17499"/>
        <dbReference type="ChEBI" id="CHEBI:29317"/>
        <dbReference type="ChEBI" id="CHEBI:57843"/>
        <dbReference type="ChEBI" id="CHEBI:57972"/>
        <dbReference type="EC" id="4.4.1.16"/>
    </reaction>
    <physiologicalReaction direction="left-to-right" evidence="1">
        <dbReference type="Rhea" id="RHEA:11633"/>
    </physiologicalReaction>
</comment>
<comment type="cofactor">
    <cofactor evidence="6">
        <name>pyridoxal 5'-phosphate</name>
        <dbReference type="ChEBI" id="CHEBI:597326"/>
    </cofactor>
</comment>
<comment type="subunit">
    <text evidence="1">Homodimer.</text>
</comment>
<comment type="interaction">
    <interactant intactId="EBI-2823066">
        <id>Q96I15</id>
    </interactant>
    <interactant intactId="EBI-2340947">
        <id>Q8N448</id>
        <label>LNX2</label>
    </interactant>
    <organismsDiffer>false</organismsDiffer>
    <experiments>3</experiments>
</comment>
<comment type="interaction">
    <interactant intactId="EBI-2823066">
        <id>Q96I15</id>
    </interactant>
    <interactant intactId="EBI-750109">
        <id>Q9NYB0</id>
        <label>TERF2IP</label>
    </interactant>
    <organismsDiffer>false</organismsDiffer>
    <experiments>2</experiments>
</comment>
<comment type="subcellular location">
    <subcellularLocation>
        <location evidence="2">Cytoplasm</location>
        <location evidence="2">Cytosol</location>
    </subcellularLocation>
</comment>
<comment type="alternative products">
    <event type="alternative splicing"/>
    <isoform>
        <id>Q96I15-1</id>
        <name>1</name>
        <sequence type="displayed"/>
    </isoform>
    <isoform>
        <id>Q96I15-2</id>
        <name>2</name>
        <sequence type="described" ref="VSP_030854"/>
    </isoform>
</comment>
<comment type="induction">
    <text evidence="5">Up-regulated in acute glomerulonephritis. Regulated by JUN/AP-1.</text>
</comment>
<comment type="similarity">
    <text evidence="8">Belongs to the class-V pyridoxal-phosphate-dependent aminotransferase family.</text>
</comment>
<comment type="sequence caution" evidence="8">
    <conflict type="erroneous initiation">
        <sequence resource="EMBL-CDS" id="BAA91659"/>
    </conflict>
    <text>Truncated N-terminus.</text>
</comment>
<sequence length="445" mass="48149">MEAAVAPGRDAPAPAASQPSGCGKHNSPERKVYMDYNATTPLEPEVIQAMTKAMWEAWGNPSSPYSAGRKAKDIINAARESLAKMIGGKPQDIIFTSGGTESNNLVIHSVVKHFHANQTSKGHTGGHHSPVKGAKPHFITSSVEHDSIRLPLEHLVEEQVAAVTFVPVSKVSGQAEVDDILAAVRPTTRLVTIMLANNETGIVMPVPEISQRIKALNQERVAAGLPPILVHTDAAQALGKQRVDVEDLGVDFLTIVGHKFYGPRIGALYIRGLGEFTPLYPMLFGGGQERNFRPGTENTPMIAGLGKAAELVTQNCEAYEAHMRDVRDYLEERLEAEFGQKRIHLNSQFPGTQRLPNTCNFSIRGPRLQGHVVLAQCRVLMASVGAACHSDHGDQPSPVLLSYGVPFDVARNALRLSVGRSTTRAEVDLVVQDLKQAVAQLEDQA</sequence>
<accession>Q96I15</accession>
<accession>B9A068</accession>
<accession>J3KN06</accession>
<accession>Q53SN1</accession>
<accession>Q53SN8</accession>
<accession>Q7L670</accession>
<accession>Q9NVT7</accession>
<accession>Q9NZR7</accession>